<organism>
    <name type="scientific">Leishmania donovani</name>
    <dbReference type="NCBI Taxonomy" id="5661"/>
    <lineage>
        <taxon>Eukaryota</taxon>
        <taxon>Discoba</taxon>
        <taxon>Euglenozoa</taxon>
        <taxon>Kinetoplastea</taxon>
        <taxon>Metakinetoplastina</taxon>
        <taxon>Trypanosomatida</taxon>
        <taxon>Trypanosomatidae</taxon>
        <taxon>Leishmaniinae</taxon>
        <taxon>Leishmania</taxon>
    </lineage>
</organism>
<reference key="1">
    <citation type="journal article" date="1991" name="Mol. Biochem. Parasitol.">
        <title>Heterogeneity of the genes encoding the major surface glycoprotein of Leishmania donovani.</title>
        <authorList>
            <person name="Webb J.R."/>
            <person name="Button L.L."/>
            <person name="McMaster R.W."/>
        </authorList>
    </citation>
    <scope>NUCLEOTIDE SEQUENCE [GENOMIC DNA]</scope>
    <source>
        <strain>MHOM/ET/67/HU3 / LV9</strain>
    </source>
</reference>
<dbReference type="EC" id="3.4.24.36"/>
<dbReference type="EMBL" id="M60048">
    <property type="protein sequence ID" value="AAA29244.1"/>
    <property type="molecule type" value="Genomic_DNA"/>
</dbReference>
<dbReference type="PIR" id="A45621">
    <property type="entry name" value="A45621"/>
</dbReference>
<dbReference type="SMR" id="P23223"/>
<dbReference type="MEROPS" id="M08.001"/>
<dbReference type="GlyConnect" id="336">
    <property type="glycosylation" value="2 N-Linked glycans"/>
</dbReference>
<dbReference type="GlyCosmos" id="P23223">
    <property type="glycosylation" value="1 site, 4 glycans"/>
</dbReference>
<dbReference type="VEuPathDB" id="TriTrypDB:LdBPK_100510.1"/>
<dbReference type="VEuPathDB" id="TriTrypDB:LdBPK_280600.1"/>
<dbReference type="VEuPathDB" id="TriTrypDB:LdCL_100011600"/>
<dbReference type="VEuPathDB" id="TriTrypDB:LDHU3_10.0760"/>
<dbReference type="BRENDA" id="3.4.24.36">
    <property type="organism ID" value="2947"/>
</dbReference>
<dbReference type="GO" id="GO:0005737">
    <property type="term" value="C:cytoplasm"/>
    <property type="evidence" value="ECO:0007669"/>
    <property type="project" value="TreeGrafter"/>
</dbReference>
<dbReference type="GO" id="GO:0005886">
    <property type="term" value="C:plasma membrane"/>
    <property type="evidence" value="ECO:0007669"/>
    <property type="project" value="UniProtKB-SubCell"/>
</dbReference>
<dbReference type="GO" id="GO:0098552">
    <property type="term" value="C:side of membrane"/>
    <property type="evidence" value="ECO:0007669"/>
    <property type="project" value="UniProtKB-KW"/>
</dbReference>
<dbReference type="GO" id="GO:0046872">
    <property type="term" value="F:metal ion binding"/>
    <property type="evidence" value="ECO:0007669"/>
    <property type="project" value="UniProtKB-KW"/>
</dbReference>
<dbReference type="GO" id="GO:0004222">
    <property type="term" value="F:metalloendopeptidase activity"/>
    <property type="evidence" value="ECO:0007669"/>
    <property type="project" value="InterPro"/>
</dbReference>
<dbReference type="GO" id="GO:0007155">
    <property type="term" value="P:cell adhesion"/>
    <property type="evidence" value="ECO:0007669"/>
    <property type="project" value="UniProtKB-KW"/>
</dbReference>
<dbReference type="GO" id="GO:0006508">
    <property type="term" value="P:proteolysis"/>
    <property type="evidence" value="ECO:0007669"/>
    <property type="project" value="UniProtKB-KW"/>
</dbReference>
<dbReference type="FunFam" id="3.90.132.10:FF:000001">
    <property type="entry name" value="leishmanolysin-like peptidase isoform X2"/>
    <property type="match status" value="1"/>
</dbReference>
<dbReference type="FunFam" id="3.10.170.20:FF:000005">
    <property type="entry name" value="MSP-A1 surface protease homolog"/>
    <property type="match status" value="1"/>
</dbReference>
<dbReference type="Gene3D" id="3.10.170.20">
    <property type="match status" value="1"/>
</dbReference>
<dbReference type="Gene3D" id="3.90.132.10">
    <property type="entry name" value="Leishmanolysin , domain 2"/>
    <property type="match status" value="1"/>
</dbReference>
<dbReference type="Gene3D" id="2.10.55.10">
    <property type="entry name" value="Leishmanolysin domain 3"/>
    <property type="match status" value="1"/>
</dbReference>
<dbReference type="Gene3D" id="2.30.34.10">
    <property type="entry name" value="Leishmanolysin domain 4"/>
    <property type="match status" value="1"/>
</dbReference>
<dbReference type="InterPro" id="IPR001577">
    <property type="entry name" value="Peptidase_M8"/>
</dbReference>
<dbReference type="PANTHER" id="PTHR10942">
    <property type="entry name" value="LEISHMANOLYSIN-LIKE PEPTIDASE"/>
    <property type="match status" value="1"/>
</dbReference>
<dbReference type="PANTHER" id="PTHR10942:SF0">
    <property type="entry name" value="LEISHMANOLYSIN-LIKE PEPTIDASE"/>
    <property type="match status" value="1"/>
</dbReference>
<dbReference type="Pfam" id="PF01457">
    <property type="entry name" value="Peptidase_M8"/>
    <property type="match status" value="1"/>
</dbReference>
<dbReference type="PRINTS" id="PR00782">
    <property type="entry name" value="LSHMANOLYSIN"/>
</dbReference>
<dbReference type="SUPFAM" id="SSF55486">
    <property type="entry name" value="Metalloproteases ('zincins'), catalytic domain"/>
    <property type="match status" value="1"/>
</dbReference>
<dbReference type="PROSITE" id="PS00142">
    <property type="entry name" value="ZINC_PROTEASE"/>
    <property type="match status" value="1"/>
</dbReference>
<name>GP63_LEIDO</name>
<keyword id="KW-0130">Cell adhesion</keyword>
<keyword id="KW-1003">Cell membrane</keyword>
<keyword id="KW-1015">Disulfide bond</keyword>
<keyword id="KW-0325">Glycoprotein</keyword>
<keyword id="KW-0336">GPI-anchor</keyword>
<keyword id="KW-0378">Hydrolase</keyword>
<keyword id="KW-0449">Lipoprotein</keyword>
<keyword id="KW-0472">Membrane</keyword>
<keyword id="KW-0479">Metal-binding</keyword>
<keyword id="KW-0482">Metalloprotease</keyword>
<keyword id="KW-0645">Protease</keyword>
<keyword id="KW-0732">Signal</keyword>
<keyword id="KW-0862">Zinc</keyword>
<keyword id="KW-0865">Zymogen</keyword>
<protein>
    <recommendedName>
        <fullName>Leishmanolysin</fullName>
        <ecNumber>3.4.24.36</ecNumber>
    </recommendedName>
    <alternativeName>
        <fullName>Cell surface protease</fullName>
    </alternativeName>
    <alternativeName>
        <fullName>Major surface glycoprotein</fullName>
    </alternativeName>
    <alternativeName>
        <fullName>Major surface protease</fullName>
    </alternativeName>
    <alternativeName>
        <fullName>Promastigote surface endopeptidase</fullName>
    </alternativeName>
    <alternativeName>
        <fullName>Protein gp63</fullName>
    </alternativeName>
</protein>
<comment type="function">
    <text>Has an integral role during the infection of macrophages in the mammalian host.</text>
</comment>
<comment type="catalytic activity">
    <reaction>
        <text>Preference for hydrophobic residues at P1 and P1' and basic residues at P2' and P3'. A model nonapeptide is cleaved at -Ala-Tyr-|-Leu-Lys-Lys-.</text>
        <dbReference type="EC" id="3.4.24.36"/>
    </reaction>
</comment>
<comment type="cofactor">
    <cofactor evidence="1">
        <name>Zn(2+)</name>
        <dbReference type="ChEBI" id="CHEBI:29105"/>
    </cofactor>
    <text evidence="1">Binds 1 zinc ion per subunit.</text>
</comment>
<comment type="subcellular location">
    <subcellularLocation>
        <location>Cell membrane</location>
        <topology>Lipid-anchor</topology>
        <topology>GPI-anchor</topology>
    </subcellularLocation>
</comment>
<comment type="similarity">
    <text evidence="5">Belongs to the peptidase M8 family.</text>
</comment>
<sequence length="590" mass="62950">MSVDSSSTHRHRSVAARLVRLAAAGAAVIAAVGTAAAWAHAGAVQHRCIHDAMQARVRQSVARHHTAPGAVSAVGLSYVTLGAAPTVVRAANWGALRIAVSTEDLTDSAYHCARVGQRISTRDGRFAICTAEDILTDEKRDILVKYLIPQALQLHTERLKVRQVQDKWKVTGMGNEICGHFKVPPAHITDGLSNTDFVMYVASVPSEGDVLAWATTCQVFSDGHPAVGVINIPAANIASRYDQLVTRVVTHEMAHALGFSVVFFRDARILESISNVRHKDFDVPVINSSTAVAKAREQYGCGTLEYLEMEDQGGAGSAGSHIKMRNAQDELMAPASDAGYYSALTMAIFQDLGFYQADFSKAEEMPWGRNAGCAFLSEKCMEDGITKWPAMFCNENEVTMRCHTGRLSLGVCGLSSSDIPLPPYWQYFTDPLLAGISAFMDYCPVVVPFGDGSCAQRASEAGAPFKGFNVFSDAARCIDGAFRPKTTETVTNSYAGLCANVRCDTATRTYSVQVHGGSGYANCTPGLRVELSTVSSAFEEGGYITCPPYVEVCQGNVQAAKDGGNAAAGRRGPRAAATALLVAALLAVAL</sequence>
<proteinExistence type="inferred from homology"/>
<feature type="signal peptide" evidence="2">
    <location>
        <begin position="1"/>
        <end position="39"/>
    </location>
</feature>
<feature type="propeptide" id="PRO_0000028661" description="Activation peptide" evidence="1">
    <location>
        <begin position="40"/>
        <end position="87"/>
    </location>
</feature>
<feature type="chain" id="PRO_0000028662" description="Leishmanolysin">
    <location>
        <begin position="88"/>
        <end position="565"/>
    </location>
</feature>
<feature type="propeptide" id="PRO_0000028663" description="Removed in mature form" evidence="1">
    <location>
        <begin position="566"/>
        <end position="590"/>
    </location>
</feature>
<feature type="active site" evidence="4">
    <location>
        <position position="252"/>
    </location>
</feature>
<feature type="binding site" evidence="4">
    <location>
        <position position="251"/>
    </location>
    <ligand>
        <name>Zn(2+)</name>
        <dbReference type="ChEBI" id="CHEBI:29105"/>
        <note>catalytic</note>
    </ligand>
</feature>
<feature type="binding site" evidence="4">
    <location>
        <position position="255"/>
    </location>
    <ligand>
        <name>Zn(2+)</name>
        <dbReference type="ChEBI" id="CHEBI:29105"/>
        <note>catalytic</note>
    </ligand>
</feature>
<feature type="binding site" evidence="4">
    <location>
        <position position="321"/>
    </location>
    <ligand>
        <name>Zn(2+)</name>
        <dbReference type="ChEBI" id="CHEBI:29105"/>
        <note>catalytic</note>
    </ligand>
</feature>
<feature type="lipid moiety-binding region" description="GPI-anchor amidated asparagine" evidence="1">
    <location>
        <position position="565"/>
    </location>
</feature>
<feature type="glycosylation site" description="N-linked (GlcNAc...) asparagine" evidence="3">
    <location>
        <position position="287"/>
    </location>
</feature>
<feature type="disulfide bond" evidence="1">
    <location>
        <begin position="112"/>
        <end position="129"/>
    </location>
</feature>
<feature type="disulfide bond" evidence="1">
    <location>
        <begin position="178"/>
        <end position="217"/>
    </location>
</feature>
<feature type="disulfide bond" evidence="1">
    <location>
        <begin position="301"/>
        <end position="373"/>
    </location>
</feature>
<feature type="disulfide bond" evidence="1">
    <location>
        <begin position="380"/>
        <end position="443"/>
    </location>
</feature>
<feature type="disulfide bond" evidence="1">
    <location>
        <begin position="393"/>
        <end position="412"/>
    </location>
</feature>
<feature type="disulfide bond" evidence="1">
    <location>
        <begin position="402"/>
        <end position="477"/>
    </location>
</feature>
<feature type="disulfide bond" evidence="1">
    <location>
        <begin position="454"/>
        <end position="498"/>
    </location>
</feature>
<feature type="disulfide bond" evidence="1">
    <location>
        <begin position="503"/>
        <end position="553"/>
    </location>
</feature>
<feature type="disulfide bond" evidence="1">
    <location>
        <begin position="523"/>
        <end position="546"/>
    </location>
</feature>
<evidence type="ECO:0000250" key="1">
    <source>
        <dbReference type="UniProtKB" id="P08148"/>
    </source>
</evidence>
<evidence type="ECO:0000255" key="2"/>
<evidence type="ECO:0000255" key="3">
    <source>
        <dbReference type="PROSITE-ProRule" id="PRU00498"/>
    </source>
</evidence>
<evidence type="ECO:0000255" key="4">
    <source>
        <dbReference type="PROSITE-ProRule" id="PRU10095"/>
    </source>
</evidence>
<evidence type="ECO:0000305" key="5"/>
<accession>P23223</accession>
<gene>
    <name type="primary">gp63</name>
</gene>